<name>TSAD_PSEP7</name>
<dbReference type="EC" id="2.3.1.234" evidence="1"/>
<dbReference type="EMBL" id="CP000744">
    <property type="protein sequence ID" value="ABR84279.1"/>
    <property type="molecule type" value="Genomic_DNA"/>
</dbReference>
<dbReference type="RefSeq" id="WP_012074166.1">
    <property type="nucleotide sequence ID" value="NC_009656.1"/>
</dbReference>
<dbReference type="SMR" id="A6UZ83"/>
<dbReference type="KEGG" id="pap:PSPA7_0723"/>
<dbReference type="HOGENOM" id="CLU_023208_0_2_6"/>
<dbReference type="Proteomes" id="UP000001582">
    <property type="component" value="Chromosome"/>
</dbReference>
<dbReference type="GO" id="GO:0005737">
    <property type="term" value="C:cytoplasm"/>
    <property type="evidence" value="ECO:0007669"/>
    <property type="project" value="UniProtKB-SubCell"/>
</dbReference>
<dbReference type="GO" id="GO:0005506">
    <property type="term" value="F:iron ion binding"/>
    <property type="evidence" value="ECO:0007669"/>
    <property type="project" value="UniProtKB-UniRule"/>
</dbReference>
<dbReference type="GO" id="GO:0061711">
    <property type="term" value="F:N(6)-L-threonylcarbamoyladenine synthase activity"/>
    <property type="evidence" value="ECO:0007669"/>
    <property type="project" value="UniProtKB-EC"/>
</dbReference>
<dbReference type="GO" id="GO:0002949">
    <property type="term" value="P:tRNA threonylcarbamoyladenosine modification"/>
    <property type="evidence" value="ECO:0007669"/>
    <property type="project" value="UniProtKB-UniRule"/>
</dbReference>
<dbReference type="CDD" id="cd24133">
    <property type="entry name" value="ASKHA_NBD_TsaD_bac"/>
    <property type="match status" value="1"/>
</dbReference>
<dbReference type="FunFam" id="3.30.420.40:FF:000012">
    <property type="entry name" value="tRNA N6-adenosine threonylcarbamoyltransferase"/>
    <property type="match status" value="1"/>
</dbReference>
<dbReference type="FunFam" id="3.30.420.40:FF:000031">
    <property type="entry name" value="tRNA N6-adenosine threonylcarbamoyltransferase"/>
    <property type="match status" value="1"/>
</dbReference>
<dbReference type="Gene3D" id="3.30.420.40">
    <property type="match status" value="2"/>
</dbReference>
<dbReference type="HAMAP" id="MF_01445">
    <property type="entry name" value="TsaD"/>
    <property type="match status" value="1"/>
</dbReference>
<dbReference type="InterPro" id="IPR043129">
    <property type="entry name" value="ATPase_NBD"/>
</dbReference>
<dbReference type="InterPro" id="IPR000905">
    <property type="entry name" value="Gcp-like_dom"/>
</dbReference>
<dbReference type="InterPro" id="IPR017861">
    <property type="entry name" value="KAE1/TsaD"/>
</dbReference>
<dbReference type="InterPro" id="IPR022450">
    <property type="entry name" value="TsaD"/>
</dbReference>
<dbReference type="NCBIfam" id="TIGR00329">
    <property type="entry name" value="gcp_kae1"/>
    <property type="match status" value="1"/>
</dbReference>
<dbReference type="NCBIfam" id="TIGR03723">
    <property type="entry name" value="T6A_TsaD_YgjD"/>
    <property type="match status" value="1"/>
</dbReference>
<dbReference type="PANTHER" id="PTHR11735">
    <property type="entry name" value="TRNA N6-ADENOSINE THREONYLCARBAMOYLTRANSFERASE"/>
    <property type="match status" value="1"/>
</dbReference>
<dbReference type="PANTHER" id="PTHR11735:SF6">
    <property type="entry name" value="TRNA N6-ADENOSINE THREONYLCARBAMOYLTRANSFERASE, MITOCHONDRIAL"/>
    <property type="match status" value="1"/>
</dbReference>
<dbReference type="Pfam" id="PF00814">
    <property type="entry name" value="TsaD"/>
    <property type="match status" value="1"/>
</dbReference>
<dbReference type="PRINTS" id="PR00789">
    <property type="entry name" value="OSIALOPTASE"/>
</dbReference>
<dbReference type="SUPFAM" id="SSF53067">
    <property type="entry name" value="Actin-like ATPase domain"/>
    <property type="match status" value="2"/>
</dbReference>
<feature type="chain" id="PRO_1000024440" description="tRNA N6-adenosine threonylcarbamoyltransferase">
    <location>
        <begin position="1"/>
        <end position="341"/>
    </location>
</feature>
<feature type="binding site" evidence="1">
    <location>
        <position position="111"/>
    </location>
    <ligand>
        <name>Fe cation</name>
        <dbReference type="ChEBI" id="CHEBI:24875"/>
    </ligand>
</feature>
<feature type="binding site" evidence="1">
    <location>
        <position position="115"/>
    </location>
    <ligand>
        <name>Fe cation</name>
        <dbReference type="ChEBI" id="CHEBI:24875"/>
    </ligand>
</feature>
<feature type="binding site" evidence="1">
    <location>
        <begin position="134"/>
        <end position="138"/>
    </location>
    <ligand>
        <name>substrate</name>
    </ligand>
</feature>
<feature type="binding site" evidence="1">
    <location>
        <position position="167"/>
    </location>
    <ligand>
        <name>substrate</name>
    </ligand>
</feature>
<feature type="binding site" evidence="1">
    <location>
        <position position="180"/>
    </location>
    <ligand>
        <name>substrate</name>
    </ligand>
</feature>
<feature type="binding site" evidence="1">
    <location>
        <position position="276"/>
    </location>
    <ligand>
        <name>substrate</name>
    </ligand>
</feature>
<feature type="binding site" evidence="1">
    <location>
        <position position="304"/>
    </location>
    <ligand>
        <name>Fe cation</name>
        <dbReference type="ChEBI" id="CHEBI:24875"/>
    </ligand>
</feature>
<reference key="1">
    <citation type="submission" date="2007-06" db="EMBL/GenBank/DDBJ databases">
        <authorList>
            <person name="Dodson R.J."/>
            <person name="Harkins D."/>
            <person name="Paulsen I.T."/>
        </authorList>
    </citation>
    <scope>NUCLEOTIDE SEQUENCE [LARGE SCALE GENOMIC DNA]</scope>
    <source>
        <strain>DSM 24068 / PA7</strain>
    </source>
</reference>
<proteinExistence type="inferred from homology"/>
<sequence length="341" mass="36514">MRVLGLETSCDETGVALYDSERGLLADALFSQIDLHRVYGGVVPELASRDHVKRMLPLIRQVLDESGCKPADIDAIAYTAGPGLVGALLVGASCAQAMAFAWGVPAVGVHHMEGHLLAPMLEEQPPRFPFVALLVSGGHTQLVRVDGIGRYQLLGESVDDAAGEAFDKTAKLIGLGYPGGPEIARLAERGTPGRFVFPRPMTDRPGLDFSFSGLKTFSLNTWQRCVEAGDDSEQTRCDIALAFQTAVVETLVIKCRRALKQTGLKNLVIAGGVSANQALRGGLEKMLGEMKGQVFYARPRFCTDNGAMIAYAGCQRLLAGQHDGPAIAVQPRWPMESLPAV</sequence>
<gene>
    <name evidence="1" type="primary">tsaD</name>
    <name type="synonym">gcp</name>
    <name type="ordered locus">PSPA7_0723</name>
</gene>
<keyword id="KW-0012">Acyltransferase</keyword>
<keyword id="KW-0963">Cytoplasm</keyword>
<keyword id="KW-0408">Iron</keyword>
<keyword id="KW-0479">Metal-binding</keyword>
<keyword id="KW-0808">Transferase</keyword>
<keyword id="KW-0819">tRNA processing</keyword>
<accession>A6UZ83</accession>
<evidence type="ECO:0000255" key="1">
    <source>
        <dbReference type="HAMAP-Rule" id="MF_01445"/>
    </source>
</evidence>
<organism>
    <name type="scientific">Pseudomonas paraeruginosa (strain DSM 24068 / PA7)</name>
    <name type="common">Pseudomonas aeruginosa (strain PA7)</name>
    <dbReference type="NCBI Taxonomy" id="381754"/>
    <lineage>
        <taxon>Bacteria</taxon>
        <taxon>Pseudomonadati</taxon>
        <taxon>Pseudomonadota</taxon>
        <taxon>Gammaproteobacteria</taxon>
        <taxon>Pseudomonadales</taxon>
        <taxon>Pseudomonadaceae</taxon>
        <taxon>Pseudomonas</taxon>
        <taxon>Pseudomonas paraeruginosa</taxon>
    </lineage>
</organism>
<protein>
    <recommendedName>
        <fullName evidence="1">tRNA N6-adenosine threonylcarbamoyltransferase</fullName>
        <ecNumber evidence="1">2.3.1.234</ecNumber>
    </recommendedName>
    <alternativeName>
        <fullName evidence="1">N6-L-threonylcarbamoyladenine synthase</fullName>
        <shortName evidence="1">t(6)A synthase</shortName>
    </alternativeName>
    <alternativeName>
        <fullName evidence="1">t(6)A37 threonylcarbamoyladenosine biosynthesis protein TsaD</fullName>
    </alternativeName>
    <alternativeName>
        <fullName evidence="1">tRNA threonylcarbamoyladenosine biosynthesis protein TsaD</fullName>
    </alternativeName>
</protein>
<comment type="function">
    <text evidence="1">Required for the formation of a threonylcarbamoyl group on adenosine at position 37 (t(6)A37) in tRNAs that read codons beginning with adenine. Is involved in the transfer of the threonylcarbamoyl moiety of threonylcarbamoyl-AMP (TC-AMP) to the N6 group of A37, together with TsaE and TsaB. TsaD likely plays a direct catalytic role in this reaction.</text>
</comment>
<comment type="catalytic activity">
    <reaction evidence="1">
        <text>L-threonylcarbamoyladenylate + adenosine(37) in tRNA = N(6)-L-threonylcarbamoyladenosine(37) in tRNA + AMP + H(+)</text>
        <dbReference type="Rhea" id="RHEA:37059"/>
        <dbReference type="Rhea" id="RHEA-COMP:10162"/>
        <dbReference type="Rhea" id="RHEA-COMP:10163"/>
        <dbReference type="ChEBI" id="CHEBI:15378"/>
        <dbReference type="ChEBI" id="CHEBI:73682"/>
        <dbReference type="ChEBI" id="CHEBI:74411"/>
        <dbReference type="ChEBI" id="CHEBI:74418"/>
        <dbReference type="ChEBI" id="CHEBI:456215"/>
        <dbReference type="EC" id="2.3.1.234"/>
    </reaction>
</comment>
<comment type="cofactor">
    <cofactor evidence="1">
        <name>Fe(2+)</name>
        <dbReference type="ChEBI" id="CHEBI:29033"/>
    </cofactor>
    <text evidence="1">Binds 1 Fe(2+) ion per subunit.</text>
</comment>
<comment type="subcellular location">
    <subcellularLocation>
        <location evidence="1">Cytoplasm</location>
    </subcellularLocation>
</comment>
<comment type="similarity">
    <text evidence="1">Belongs to the KAE1 / TsaD family.</text>
</comment>